<organism>
    <name type="scientific">Bothrops neuwiedi</name>
    <name type="common">Neuwied's lancehead</name>
    <dbReference type="NCBI Taxonomy" id="95648"/>
    <lineage>
        <taxon>Eukaryota</taxon>
        <taxon>Metazoa</taxon>
        <taxon>Chordata</taxon>
        <taxon>Craniata</taxon>
        <taxon>Vertebrata</taxon>
        <taxon>Euteleostomi</taxon>
        <taxon>Lepidosauria</taxon>
        <taxon>Squamata</taxon>
        <taxon>Bifurcata</taxon>
        <taxon>Unidentata</taxon>
        <taxon>Episquamata</taxon>
        <taxon>Toxicofera</taxon>
        <taxon>Serpentes</taxon>
        <taxon>Colubroidea</taxon>
        <taxon>Viperidae</taxon>
        <taxon>Crotalinae</taxon>
        <taxon>Bothrops</taxon>
    </lineage>
</organism>
<protein>
    <recommendedName>
        <fullName evidence="1">Bradykinin-potentiating peptide 13a</fullName>
        <shortName evidence="1">BPP-13a</shortName>
    </recommendedName>
    <alternativeName>
        <fullName evidence="4">BPP-III</fullName>
    </alternativeName>
</protein>
<proteinExistence type="evidence at protein level"/>
<evidence type="ECO:0000250" key="1">
    <source>
        <dbReference type="UniProtKB" id="Q6LEM5"/>
    </source>
</evidence>
<evidence type="ECO:0000269" key="2">
    <source>
    </source>
</evidence>
<evidence type="ECO:0000269" key="3">
    <source>
    </source>
</evidence>
<evidence type="ECO:0000303" key="4">
    <source>
    </source>
</evidence>
<evidence type="ECO:0000305" key="5"/>
<name>BPPDA_BOTNU</name>
<keyword id="KW-0903">Direct protein sequencing</keyword>
<keyword id="KW-0382">Hypotensive agent</keyword>
<keyword id="KW-0481">Metalloenzyme inhibitor</keyword>
<keyword id="KW-0483">Metalloprotease inhibitor</keyword>
<keyword id="KW-0646">Protease inhibitor</keyword>
<keyword id="KW-0873">Pyrrolidone carboxylic acid</keyword>
<keyword id="KW-0964">Secreted</keyword>
<dbReference type="GO" id="GO:0005576">
    <property type="term" value="C:extracellular region"/>
    <property type="evidence" value="ECO:0007669"/>
    <property type="project" value="UniProtKB-SubCell"/>
</dbReference>
<dbReference type="GO" id="GO:0030414">
    <property type="term" value="F:peptidase inhibitor activity"/>
    <property type="evidence" value="ECO:0007669"/>
    <property type="project" value="UniProtKB-KW"/>
</dbReference>
<dbReference type="GO" id="GO:0008217">
    <property type="term" value="P:regulation of blood pressure"/>
    <property type="evidence" value="ECO:0007669"/>
    <property type="project" value="UniProtKB-KW"/>
</dbReference>
<feature type="peptide" id="PRO_0000343186" description="Bradykinin-potentiating peptide 13a" evidence="2 3">
    <location>
        <begin position="1"/>
        <end position="13"/>
    </location>
</feature>
<feature type="modified residue" description="Pyrrolidone carboxylic acid" evidence="2">
    <location>
        <position position="1"/>
    </location>
</feature>
<comment type="function">
    <text>This peptide both inhibits the activity of the angiotensin-converting enzyme (ACE) and enhances the action of bradykinin by inhibiting the peptidases that inactivate it. It acts as an indirect hypotensive agent.</text>
</comment>
<comment type="subcellular location">
    <subcellularLocation>
        <location evidence="2">Secreted</location>
    </subcellularLocation>
</comment>
<comment type="tissue specificity">
    <text evidence="2">Expressed by the venom gland.</text>
</comment>
<comment type="mass spectrometry" mass="1372.0" method="Unknown" evidence="3"/>
<comment type="mass spectrometry" mass="1370.85" method="MALDI" evidence="2"/>
<comment type="similarity">
    <text evidence="5">Belongs to the bradykinin-potentiating peptide family.</text>
</comment>
<sequence length="13" mass="1388">QGGWPRPGPEIPP</sequence>
<reference key="1">
    <citation type="journal article" date="1998" name="J. Protein Chem.">
        <title>Isolation: analysis and properties of three bradykinin-potentiating peptides (BPP-II, BPP-III, and BPP-V) from Bothrops neuwiedi venom.</title>
        <authorList>
            <person name="Ferreira L.A.F."/>
            <person name="Galle A."/>
            <person name="Raida M."/>
            <person name="Schrader M."/>
            <person name="Lebrun I."/>
            <person name="Habermehl G."/>
        </authorList>
    </citation>
    <scope>PROTEIN SEQUENCE</scope>
    <scope>MASS SPECTROMETRY</scope>
    <source>
        <tissue>Venom</tissue>
    </source>
</reference>
<reference key="2">
    <citation type="journal article" date="2005" name="Rapid Commun. Mass Spectrom.">
        <title>Fast analysis of low molecular mass compounds present in snake venom: identification of ten new pyroglutamate-containing peptides.</title>
        <authorList>
            <person name="Wermelinger L.S."/>
            <person name="Dutra D.L."/>
            <person name="Oliveira-Carvalho A.L."/>
            <person name="Soares M.R."/>
            <person name="Bloch C. Jr."/>
            <person name="Zingali R.B."/>
        </authorList>
    </citation>
    <scope>PROTEIN SEQUENCE</scope>
    <scope>SUBCELLULAR LOCATION</scope>
    <scope>TISSUE SPECIFICITY</scope>
    <scope>MASS SPECTROMETRY</scope>
    <scope>PYROGLUTAMATE FORMATION AT GLN-1</scope>
    <source>
        <tissue>Venom</tissue>
    </source>
</reference>
<accession>P0C7S2</accession>